<feature type="chain" id="PRO_0000100670" description="Sulfate adenylyltransferase subunit 2">
    <location>
        <begin position="1"/>
        <end position="305"/>
    </location>
</feature>
<keyword id="KW-0067">ATP-binding</keyword>
<keyword id="KW-0547">Nucleotide-binding</keyword>
<keyword id="KW-0548">Nucleotidyltransferase</keyword>
<keyword id="KW-1185">Reference proteome</keyword>
<keyword id="KW-0808">Transferase</keyword>
<sequence length="305" mass="35284">MVDKLTHLKQLEAESIHIIREVAAEFDNPVMLYSIGKDSAVMLHLARKAFFPGKLPFPVMHVDTQWKFQEMYSFRDKMVEEMGLELITHVNPEGVAQGINPFTHGSSKHTDIMKTQGLKQALDKHGFDAAFGGARRDEEKSRAKERVYSFRDSKHRWDPKNQRPELWNVYNGKVNKGESIRVFPLSNWTELDIWQYIYLEGIPIVPLYFAAEREVIEKNGTLIMIDDERILEHLSEEEKARIVKKKVRFRTLGCYPLTGAVESEAETLTDIIQEMLLTRTSERQGRVIDHDGAGSMEDKKRQGYF</sequence>
<gene>
    <name evidence="1" type="primary">cysD</name>
    <name type="ordered locus">PP_1303</name>
</gene>
<dbReference type="EC" id="2.7.7.4" evidence="1"/>
<dbReference type="EMBL" id="AE015451">
    <property type="protein sequence ID" value="AAN66927.1"/>
    <property type="molecule type" value="Genomic_DNA"/>
</dbReference>
<dbReference type="RefSeq" id="NP_743463.1">
    <property type="nucleotide sequence ID" value="NC_002947.4"/>
</dbReference>
<dbReference type="RefSeq" id="WP_003251799.1">
    <property type="nucleotide sequence ID" value="NZ_CP169744.1"/>
</dbReference>
<dbReference type="SMR" id="Q88NA9"/>
<dbReference type="STRING" id="160488.PP_1303"/>
<dbReference type="PaxDb" id="160488-PP_1303"/>
<dbReference type="GeneID" id="83682263"/>
<dbReference type="KEGG" id="ppu:PP_1303"/>
<dbReference type="PATRIC" id="fig|160488.4.peg.1382"/>
<dbReference type="eggNOG" id="COG0175">
    <property type="taxonomic scope" value="Bacteria"/>
</dbReference>
<dbReference type="HOGENOM" id="CLU_043026_0_0_6"/>
<dbReference type="OrthoDB" id="9772604at2"/>
<dbReference type="PhylomeDB" id="Q88NA9"/>
<dbReference type="BioCyc" id="PPUT160488:G1G01-1390-MONOMER"/>
<dbReference type="UniPathway" id="UPA00140">
    <property type="reaction ID" value="UER00204"/>
</dbReference>
<dbReference type="Proteomes" id="UP000000556">
    <property type="component" value="Chromosome"/>
</dbReference>
<dbReference type="GO" id="GO:0005524">
    <property type="term" value="F:ATP binding"/>
    <property type="evidence" value="ECO:0007669"/>
    <property type="project" value="UniProtKB-KW"/>
</dbReference>
<dbReference type="GO" id="GO:0004781">
    <property type="term" value="F:sulfate adenylyltransferase (ATP) activity"/>
    <property type="evidence" value="ECO:0007669"/>
    <property type="project" value="UniProtKB-UniRule"/>
</dbReference>
<dbReference type="GO" id="GO:0070814">
    <property type="term" value="P:hydrogen sulfide biosynthetic process"/>
    <property type="evidence" value="ECO:0007669"/>
    <property type="project" value="UniProtKB-UniRule"/>
</dbReference>
<dbReference type="GO" id="GO:0000103">
    <property type="term" value="P:sulfate assimilation"/>
    <property type="evidence" value="ECO:0007669"/>
    <property type="project" value="UniProtKB-UniRule"/>
</dbReference>
<dbReference type="CDD" id="cd23946">
    <property type="entry name" value="Sulfate_adenylyltransferase_2"/>
    <property type="match status" value="1"/>
</dbReference>
<dbReference type="FunFam" id="3.40.50.620:FF:000002">
    <property type="entry name" value="Sulfate adenylyltransferase subunit 2"/>
    <property type="match status" value="1"/>
</dbReference>
<dbReference type="Gene3D" id="3.40.50.620">
    <property type="entry name" value="HUPs"/>
    <property type="match status" value="1"/>
</dbReference>
<dbReference type="HAMAP" id="MF_00064">
    <property type="entry name" value="Sulf_adenylyltr_sub2"/>
    <property type="match status" value="1"/>
</dbReference>
<dbReference type="InterPro" id="IPR002500">
    <property type="entry name" value="PAPS_reduct_dom"/>
</dbReference>
<dbReference type="InterPro" id="IPR014729">
    <property type="entry name" value="Rossmann-like_a/b/a_fold"/>
</dbReference>
<dbReference type="InterPro" id="IPR011784">
    <property type="entry name" value="SO4_adenylTrfase_ssu"/>
</dbReference>
<dbReference type="InterPro" id="IPR050128">
    <property type="entry name" value="Sulfate_adenylyltrnsfr_sub2"/>
</dbReference>
<dbReference type="NCBIfam" id="TIGR02039">
    <property type="entry name" value="CysD"/>
    <property type="match status" value="1"/>
</dbReference>
<dbReference type="NCBIfam" id="NF003587">
    <property type="entry name" value="PRK05253.1"/>
    <property type="match status" value="1"/>
</dbReference>
<dbReference type="NCBIfam" id="NF009214">
    <property type="entry name" value="PRK12563.1"/>
    <property type="match status" value="1"/>
</dbReference>
<dbReference type="PANTHER" id="PTHR43196">
    <property type="entry name" value="SULFATE ADENYLYLTRANSFERASE SUBUNIT 2"/>
    <property type="match status" value="1"/>
</dbReference>
<dbReference type="PANTHER" id="PTHR43196:SF1">
    <property type="entry name" value="SULFATE ADENYLYLTRANSFERASE SUBUNIT 2"/>
    <property type="match status" value="1"/>
</dbReference>
<dbReference type="Pfam" id="PF01507">
    <property type="entry name" value="PAPS_reduct"/>
    <property type="match status" value="1"/>
</dbReference>
<dbReference type="PIRSF" id="PIRSF002936">
    <property type="entry name" value="CysDAde_trans"/>
    <property type="match status" value="1"/>
</dbReference>
<dbReference type="SUPFAM" id="SSF52402">
    <property type="entry name" value="Adenine nucleotide alpha hydrolases-like"/>
    <property type="match status" value="1"/>
</dbReference>
<evidence type="ECO:0000255" key="1">
    <source>
        <dbReference type="HAMAP-Rule" id="MF_00064"/>
    </source>
</evidence>
<proteinExistence type="inferred from homology"/>
<organism>
    <name type="scientific">Pseudomonas putida (strain ATCC 47054 / DSM 6125 / CFBP 8728 / NCIMB 11950 / KT2440)</name>
    <dbReference type="NCBI Taxonomy" id="160488"/>
    <lineage>
        <taxon>Bacteria</taxon>
        <taxon>Pseudomonadati</taxon>
        <taxon>Pseudomonadota</taxon>
        <taxon>Gammaproteobacteria</taxon>
        <taxon>Pseudomonadales</taxon>
        <taxon>Pseudomonadaceae</taxon>
        <taxon>Pseudomonas</taxon>
    </lineage>
</organism>
<protein>
    <recommendedName>
        <fullName evidence="1">Sulfate adenylyltransferase subunit 2</fullName>
        <ecNumber evidence="1">2.7.7.4</ecNumber>
    </recommendedName>
    <alternativeName>
        <fullName evidence="1">ATP-sulfurylase small subunit</fullName>
    </alternativeName>
    <alternativeName>
        <fullName evidence="1">Sulfate adenylate transferase</fullName>
        <shortName evidence="1">SAT</shortName>
    </alternativeName>
</protein>
<comment type="function">
    <text evidence="1">With CysN forms the ATP sulfurylase (ATPS) that catalyzes the adenylation of sulfate producing adenosine 5'-phosphosulfate (APS) and diphosphate, the first enzymatic step in sulfur assimilation pathway. APS synthesis involves the formation of a high-energy phosphoric-sulfuric acid anhydride bond driven by GTP hydrolysis by CysN coupled to ATP hydrolysis by CysD.</text>
</comment>
<comment type="catalytic activity">
    <reaction evidence="1">
        <text>sulfate + ATP + H(+) = adenosine 5'-phosphosulfate + diphosphate</text>
        <dbReference type="Rhea" id="RHEA:18133"/>
        <dbReference type="ChEBI" id="CHEBI:15378"/>
        <dbReference type="ChEBI" id="CHEBI:16189"/>
        <dbReference type="ChEBI" id="CHEBI:30616"/>
        <dbReference type="ChEBI" id="CHEBI:33019"/>
        <dbReference type="ChEBI" id="CHEBI:58243"/>
        <dbReference type="EC" id="2.7.7.4"/>
    </reaction>
</comment>
<comment type="pathway">
    <text evidence="1">Sulfur metabolism; hydrogen sulfide biosynthesis; sulfite from sulfate: step 1/3.</text>
</comment>
<comment type="subunit">
    <text evidence="1">Heterodimer composed of CysD, the smaller subunit, and CysN.</text>
</comment>
<comment type="similarity">
    <text evidence="1">Belongs to the PAPS reductase family. CysD subfamily.</text>
</comment>
<accession>Q88NA9</accession>
<name>CYSD_PSEPK</name>
<reference key="1">
    <citation type="journal article" date="2002" name="Environ. Microbiol.">
        <title>Complete genome sequence and comparative analysis of the metabolically versatile Pseudomonas putida KT2440.</title>
        <authorList>
            <person name="Nelson K.E."/>
            <person name="Weinel C."/>
            <person name="Paulsen I.T."/>
            <person name="Dodson R.J."/>
            <person name="Hilbert H."/>
            <person name="Martins dos Santos V.A.P."/>
            <person name="Fouts D.E."/>
            <person name="Gill S.R."/>
            <person name="Pop M."/>
            <person name="Holmes M."/>
            <person name="Brinkac L.M."/>
            <person name="Beanan M.J."/>
            <person name="DeBoy R.T."/>
            <person name="Daugherty S.C."/>
            <person name="Kolonay J.F."/>
            <person name="Madupu R."/>
            <person name="Nelson W.C."/>
            <person name="White O."/>
            <person name="Peterson J.D."/>
            <person name="Khouri H.M."/>
            <person name="Hance I."/>
            <person name="Chris Lee P."/>
            <person name="Holtzapple E.K."/>
            <person name="Scanlan D."/>
            <person name="Tran K."/>
            <person name="Moazzez A."/>
            <person name="Utterback T.R."/>
            <person name="Rizzo M."/>
            <person name="Lee K."/>
            <person name="Kosack D."/>
            <person name="Moestl D."/>
            <person name="Wedler H."/>
            <person name="Lauber J."/>
            <person name="Stjepandic D."/>
            <person name="Hoheisel J."/>
            <person name="Straetz M."/>
            <person name="Heim S."/>
            <person name="Kiewitz C."/>
            <person name="Eisen J.A."/>
            <person name="Timmis K.N."/>
            <person name="Duesterhoeft A."/>
            <person name="Tuemmler B."/>
            <person name="Fraser C.M."/>
        </authorList>
    </citation>
    <scope>NUCLEOTIDE SEQUENCE [LARGE SCALE GENOMIC DNA]</scope>
    <source>
        <strain>ATCC 47054 / DSM 6125 / CFBP 8728 / NCIMB 11950 / KT2440</strain>
    </source>
</reference>